<protein>
    <recommendedName>
        <fullName evidence="1">Large ribosomal subunit protein bL21</fullName>
    </recommendedName>
    <alternativeName>
        <fullName evidence="2">50S ribosomal protein L21</fullName>
    </alternativeName>
</protein>
<sequence>MYVIVEINGQQFKAEQGKKLFVHHIQNAESGAVVEFDKVLLVDNNGEVTVGVPTVEGAKVVCEVLSPLVKGDKVLVFHKKRRKGYRKLNGHRQQFTEVSIKEVIA</sequence>
<evidence type="ECO:0000255" key="1">
    <source>
        <dbReference type="HAMAP-Rule" id="MF_01363"/>
    </source>
</evidence>
<evidence type="ECO:0000305" key="2"/>
<dbReference type="EMBL" id="CP000140">
    <property type="protein sequence ID" value="ABR42093.1"/>
    <property type="molecule type" value="Genomic_DNA"/>
</dbReference>
<dbReference type="RefSeq" id="WP_005861907.1">
    <property type="nucleotide sequence ID" value="NZ_LR215978.1"/>
</dbReference>
<dbReference type="SMR" id="A6L8S9"/>
<dbReference type="STRING" id="435591.BDI_0308"/>
<dbReference type="PaxDb" id="435591-BDI_0308"/>
<dbReference type="GeneID" id="93524480"/>
<dbReference type="KEGG" id="pdi:BDI_0308"/>
<dbReference type="eggNOG" id="COG0261">
    <property type="taxonomic scope" value="Bacteria"/>
</dbReference>
<dbReference type="HOGENOM" id="CLU_061463_3_2_10"/>
<dbReference type="BioCyc" id="PDIS435591:G1G5A-318-MONOMER"/>
<dbReference type="Proteomes" id="UP000000566">
    <property type="component" value="Chromosome"/>
</dbReference>
<dbReference type="GO" id="GO:0005737">
    <property type="term" value="C:cytoplasm"/>
    <property type="evidence" value="ECO:0007669"/>
    <property type="project" value="UniProtKB-ARBA"/>
</dbReference>
<dbReference type="GO" id="GO:1990904">
    <property type="term" value="C:ribonucleoprotein complex"/>
    <property type="evidence" value="ECO:0007669"/>
    <property type="project" value="UniProtKB-KW"/>
</dbReference>
<dbReference type="GO" id="GO:0005840">
    <property type="term" value="C:ribosome"/>
    <property type="evidence" value="ECO:0007669"/>
    <property type="project" value="UniProtKB-KW"/>
</dbReference>
<dbReference type="GO" id="GO:0019843">
    <property type="term" value="F:rRNA binding"/>
    <property type="evidence" value="ECO:0007669"/>
    <property type="project" value="UniProtKB-UniRule"/>
</dbReference>
<dbReference type="GO" id="GO:0003735">
    <property type="term" value="F:structural constituent of ribosome"/>
    <property type="evidence" value="ECO:0007669"/>
    <property type="project" value="InterPro"/>
</dbReference>
<dbReference type="GO" id="GO:0006412">
    <property type="term" value="P:translation"/>
    <property type="evidence" value="ECO:0007669"/>
    <property type="project" value="UniProtKB-UniRule"/>
</dbReference>
<dbReference type="HAMAP" id="MF_01363">
    <property type="entry name" value="Ribosomal_bL21"/>
    <property type="match status" value="1"/>
</dbReference>
<dbReference type="InterPro" id="IPR028909">
    <property type="entry name" value="bL21-like"/>
</dbReference>
<dbReference type="InterPro" id="IPR036164">
    <property type="entry name" value="bL21-like_sf"/>
</dbReference>
<dbReference type="InterPro" id="IPR001787">
    <property type="entry name" value="Ribosomal_bL21"/>
</dbReference>
<dbReference type="NCBIfam" id="TIGR00061">
    <property type="entry name" value="L21"/>
    <property type="match status" value="1"/>
</dbReference>
<dbReference type="PANTHER" id="PTHR21349">
    <property type="entry name" value="50S RIBOSOMAL PROTEIN L21"/>
    <property type="match status" value="1"/>
</dbReference>
<dbReference type="PANTHER" id="PTHR21349:SF0">
    <property type="entry name" value="LARGE RIBOSOMAL SUBUNIT PROTEIN BL21M"/>
    <property type="match status" value="1"/>
</dbReference>
<dbReference type="Pfam" id="PF00829">
    <property type="entry name" value="Ribosomal_L21p"/>
    <property type="match status" value="1"/>
</dbReference>
<dbReference type="SUPFAM" id="SSF141091">
    <property type="entry name" value="L21p-like"/>
    <property type="match status" value="1"/>
</dbReference>
<keyword id="KW-1185">Reference proteome</keyword>
<keyword id="KW-0687">Ribonucleoprotein</keyword>
<keyword id="KW-0689">Ribosomal protein</keyword>
<keyword id="KW-0694">RNA-binding</keyword>
<keyword id="KW-0699">rRNA-binding</keyword>
<organism>
    <name type="scientific">Parabacteroides distasonis (strain ATCC 8503 / DSM 20701 / CIP 104284 / JCM 5825 / NCTC 11152)</name>
    <dbReference type="NCBI Taxonomy" id="435591"/>
    <lineage>
        <taxon>Bacteria</taxon>
        <taxon>Pseudomonadati</taxon>
        <taxon>Bacteroidota</taxon>
        <taxon>Bacteroidia</taxon>
        <taxon>Bacteroidales</taxon>
        <taxon>Tannerellaceae</taxon>
        <taxon>Parabacteroides</taxon>
    </lineage>
</organism>
<gene>
    <name evidence="1" type="primary">rplU</name>
    <name type="ordered locus">BDI_0308</name>
</gene>
<proteinExistence type="inferred from homology"/>
<accession>A6L8S9</accession>
<name>RL21_PARD8</name>
<reference key="1">
    <citation type="journal article" date="2007" name="PLoS Biol.">
        <title>Evolution of symbiotic bacteria in the distal human intestine.</title>
        <authorList>
            <person name="Xu J."/>
            <person name="Mahowald M.A."/>
            <person name="Ley R.E."/>
            <person name="Lozupone C.A."/>
            <person name="Hamady M."/>
            <person name="Martens E.C."/>
            <person name="Henrissat B."/>
            <person name="Coutinho P.M."/>
            <person name="Minx P."/>
            <person name="Latreille P."/>
            <person name="Cordum H."/>
            <person name="Van Brunt A."/>
            <person name="Kim K."/>
            <person name="Fulton R.S."/>
            <person name="Fulton L.A."/>
            <person name="Clifton S.W."/>
            <person name="Wilson R.K."/>
            <person name="Knight R.D."/>
            <person name="Gordon J.I."/>
        </authorList>
    </citation>
    <scope>NUCLEOTIDE SEQUENCE [LARGE SCALE GENOMIC DNA]</scope>
    <source>
        <strain>ATCC 8503 / DSM 20701 / CIP 104284 / JCM 5825 / NCTC 11152</strain>
    </source>
</reference>
<feature type="chain" id="PRO_1000067866" description="Large ribosomal subunit protein bL21">
    <location>
        <begin position="1"/>
        <end position="105"/>
    </location>
</feature>
<comment type="function">
    <text evidence="1">This protein binds to 23S rRNA in the presence of protein L20.</text>
</comment>
<comment type="subunit">
    <text evidence="1">Part of the 50S ribosomal subunit. Contacts protein L20.</text>
</comment>
<comment type="similarity">
    <text evidence="1">Belongs to the bacterial ribosomal protein bL21 family.</text>
</comment>